<dbReference type="EMBL" id="AACD01000029">
    <property type="protein sequence ID" value="EAA65141.1"/>
    <property type="molecule type" value="Genomic_DNA"/>
</dbReference>
<dbReference type="EMBL" id="BN001307">
    <property type="protein sequence ID" value="CBF85931.1"/>
    <property type="molecule type" value="Genomic_DNA"/>
</dbReference>
<dbReference type="RefSeq" id="XP_659580.1">
    <property type="nucleotide sequence ID" value="XM_654488.1"/>
</dbReference>
<dbReference type="SMR" id="Q5BBV4"/>
<dbReference type="FunCoup" id="Q5BBV4">
    <property type="interactions" value="634"/>
</dbReference>
<dbReference type="STRING" id="227321.Q5BBV4"/>
<dbReference type="EnsemblFungi" id="CBF85931">
    <property type="protein sequence ID" value="CBF85931"/>
    <property type="gene ID" value="ANIA_01976"/>
</dbReference>
<dbReference type="KEGG" id="ani:ANIA_01976"/>
<dbReference type="VEuPathDB" id="FungiDB:AN1976"/>
<dbReference type="eggNOG" id="KOG3001">
    <property type="taxonomic scope" value="Eukaryota"/>
</dbReference>
<dbReference type="HOGENOM" id="CLU_039566_1_1_1"/>
<dbReference type="InParanoid" id="Q5BBV4"/>
<dbReference type="OMA" id="GLQTYFD"/>
<dbReference type="OrthoDB" id="124855at2759"/>
<dbReference type="Proteomes" id="UP000000560">
    <property type="component" value="Chromosome VII"/>
</dbReference>
<dbReference type="GO" id="GO:0035267">
    <property type="term" value="C:NuA4 histone acetyltransferase complex"/>
    <property type="evidence" value="ECO:0000318"/>
    <property type="project" value="GO_Central"/>
</dbReference>
<dbReference type="GO" id="GO:1990453">
    <property type="term" value="C:nucleosome disassembly/reassembly complex"/>
    <property type="evidence" value="ECO:0007669"/>
    <property type="project" value="EnsemblFungi"/>
</dbReference>
<dbReference type="GO" id="GO:0032221">
    <property type="term" value="C:Rpd3S complex"/>
    <property type="evidence" value="ECO:0000318"/>
    <property type="project" value="GO_Central"/>
</dbReference>
<dbReference type="GO" id="GO:0140566">
    <property type="term" value="F:histone reader activity"/>
    <property type="evidence" value="ECO:0007669"/>
    <property type="project" value="EnsemblFungi"/>
</dbReference>
<dbReference type="GO" id="GO:0035064">
    <property type="term" value="F:methylated histone binding"/>
    <property type="evidence" value="ECO:0007669"/>
    <property type="project" value="EnsemblFungi"/>
</dbReference>
<dbReference type="GO" id="GO:0006281">
    <property type="term" value="P:DNA repair"/>
    <property type="evidence" value="ECO:0007669"/>
    <property type="project" value="UniProtKB-KW"/>
</dbReference>
<dbReference type="GO" id="GO:0006335">
    <property type="term" value="P:DNA replication-dependent chromatin assembly"/>
    <property type="evidence" value="ECO:0007669"/>
    <property type="project" value="EnsemblFungi"/>
</dbReference>
<dbReference type="GO" id="GO:0060195">
    <property type="term" value="P:negative regulation of antisense RNA transcription"/>
    <property type="evidence" value="ECO:0007669"/>
    <property type="project" value="EnsemblFungi"/>
</dbReference>
<dbReference type="GO" id="GO:0006337">
    <property type="term" value="P:nucleosome disassembly"/>
    <property type="evidence" value="ECO:0007669"/>
    <property type="project" value="EnsemblFungi"/>
</dbReference>
<dbReference type="GO" id="GO:0032968">
    <property type="term" value="P:positive regulation of transcription elongation by RNA polymerase II"/>
    <property type="evidence" value="ECO:0007669"/>
    <property type="project" value="EnsemblFungi"/>
</dbReference>
<dbReference type="GO" id="GO:0030174">
    <property type="term" value="P:regulation of DNA-templated DNA replication initiation"/>
    <property type="evidence" value="ECO:0007669"/>
    <property type="project" value="EnsemblFungi"/>
</dbReference>
<dbReference type="GO" id="GO:0043487">
    <property type="term" value="P:regulation of RNA stability"/>
    <property type="evidence" value="ECO:0007669"/>
    <property type="project" value="EnsemblFungi"/>
</dbReference>
<dbReference type="GO" id="GO:0006368">
    <property type="term" value="P:transcription elongation by RNA polymerase II"/>
    <property type="evidence" value="ECO:0007669"/>
    <property type="project" value="EnsemblFungi"/>
</dbReference>
<dbReference type="CDD" id="cd18983">
    <property type="entry name" value="CBD_MSL3_like"/>
    <property type="match status" value="1"/>
</dbReference>
<dbReference type="FunFam" id="2.30.30.140:FF:000077">
    <property type="entry name" value="Chromatin modification-related protein eaf3"/>
    <property type="match status" value="1"/>
</dbReference>
<dbReference type="FunFam" id="1.10.274.30:FF:000004">
    <property type="entry name" value="Putative Chromatin modification-related protein eaf3"/>
    <property type="match status" value="1"/>
</dbReference>
<dbReference type="Gene3D" id="2.30.30.140">
    <property type="match status" value="1"/>
</dbReference>
<dbReference type="Gene3D" id="1.10.274.30">
    <property type="entry name" value="MRG domain"/>
    <property type="match status" value="1"/>
</dbReference>
<dbReference type="InterPro" id="IPR016197">
    <property type="entry name" value="Chromo-like_dom_sf"/>
</dbReference>
<dbReference type="InterPro" id="IPR000953">
    <property type="entry name" value="Chromo/chromo_shadow_dom"/>
</dbReference>
<dbReference type="InterPro" id="IPR008676">
    <property type="entry name" value="MRG"/>
</dbReference>
<dbReference type="InterPro" id="IPR038217">
    <property type="entry name" value="MRG_C_sf"/>
</dbReference>
<dbReference type="InterPro" id="IPR026541">
    <property type="entry name" value="MRG_dom"/>
</dbReference>
<dbReference type="InterPro" id="IPR053820">
    <property type="entry name" value="MSL3_chromo-like"/>
</dbReference>
<dbReference type="PANTHER" id="PTHR10880">
    <property type="entry name" value="MORTALITY FACTOR 4-LIKE PROTEIN"/>
    <property type="match status" value="1"/>
</dbReference>
<dbReference type="PANTHER" id="PTHR10880:SF15">
    <property type="entry name" value="MSL COMPLEX SUBUNIT 3"/>
    <property type="match status" value="1"/>
</dbReference>
<dbReference type="Pfam" id="PF05712">
    <property type="entry name" value="MRG"/>
    <property type="match status" value="1"/>
</dbReference>
<dbReference type="Pfam" id="PF22732">
    <property type="entry name" value="MSL3_chromo-like"/>
    <property type="match status" value="1"/>
</dbReference>
<dbReference type="PIRSF" id="PIRSF038133">
    <property type="entry name" value="HAT_Nua4_EAF3/MRG15"/>
    <property type="match status" value="1"/>
</dbReference>
<dbReference type="SMART" id="SM00298">
    <property type="entry name" value="CHROMO"/>
    <property type="match status" value="1"/>
</dbReference>
<dbReference type="SUPFAM" id="SSF54160">
    <property type="entry name" value="Chromo domain-like"/>
    <property type="match status" value="1"/>
</dbReference>
<dbReference type="PROSITE" id="PS51640">
    <property type="entry name" value="MRG"/>
    <property type="match status" value="1"/>
</dbReference>
<feature type="chain" id="PRO_0000088778" description="Chromatin modification-related protein eaf3">
    <location>
        <begin position="1"/>
        <end position="327"/>
    </location>
</feature>
<feature type="domain" description="Tudor-knot" evidence="2">
    <location>
        <begin position="13"/>
        <end position="66"/>
    </location>
</feature>
<feature type="domain" description="MRG" evidence="3">
    <location>
        <begin position="138"/>
        <end position="312"/>
    </location>
</feature>
<feature type="region of interest" description="Disordered" evidence="4">
    <location>
        <begin position="85"/>
        <end position="132"/>
    </location>
</feature>
<feature type="compositionally biased region" description="Basic and acidic residues" evidence="4">
    <location>
        <begin position="100"/>
        <end position="114"/>
    </location>
</feature>
<gene>
    <name type="primary">eaf3</name>
    <name type="ORF">AN1976</name>
</gene>
<accession>Q5BBV4</accession>
<accession>C8VL49</accession>
<organism>
    <name type="scientific">Emericella nidulans (strain FGSC A4 / ATCC 38163 / CBS 112.46 / NRRL 194 / M139)</name>
    <name type="common">Aspergillus nidulans</name>
    <dbReference type="NCBI Taxonomy" id="227321"/>
    <lineage>
        <taxon>Eukaryota</taxon>
        <taxon>Fungi</taxon>
        <taxon>Dikarya</taxon>
        <taxon>Ascomycota</taxon>
        <taxon>Pezizomycotina</taxon>
        <taxon>Eurotiomycetes</taxon>
        <taxon>Eurotiomycetidae</taxon>
        <taxon>Eurotiales</taxon>
        <taxon>Aspergillaceae</taxon>
        <taxon>Aspergillus</taxon>
        <taxon>Aspergillus subgen. Nidulantes</taxon>
    </lineage>
</organism>
<evidence type="ECO:0000250" key="1"/>
<evidence type="ECO:0000255" key="2"/>
<evidence type="ECO:0000255" key="3">
    <source>
        <dbReference type="PROSITE-ProRule" id="PRU00972"/>
    </source>
</evidence>
<evidence type="ECO:0000256" key="4">
    <source>
        <dbReference type="SAM" id="MobiDB-lite"/>
    </source>
</evidence>
<evidence type="ECO:0000305" key="5"/>
<protein>
    <recommendedName>
        <fullName>Chromatin modification-related protein eaf3</fullName>
    </recommendedName>
</protein>
<comment type="function">
    <text evidence="1">Involved in deacetylation of histones, chromatin assembly and chromosome segregation. May act as a transcriptional oscillator, directing histone deacetylases to specific chromosomal domains. Component of the NuA4 histone acetyltransferase complex which is involved in transcriptional activation of selected genes principally by acetylation of nucleosomal histone H4 and H2A. The NuA4 complex is also involved in DNA repair (By similarity).</text>
</comment>
<comment type="subunit">
    <text evidence="1">Component of the NuA4 histone acetyltransferase complex.</text>
</comment>
<comment type="subcellular location">
    <subcellularLocation>
        <location evidence="3">Nucleus</location>
    </subcellularLocation>
</comment>
<comment type="similarity">
    <text evidence="5">Belongs to the MRG family.</text>
</comment>
<proteinExistence type="inferred from homology"/>
<reference key="1">
    <citation type="journal article" date="2005" name="Nature">
        <title>Sequencing of Aspergillus nidulans and comparative analysis with A. fumigatus and A. oryzae.</title>
        <authorList>
            <person name="Galagan J.E."/>
            <person name="Calvo S.E."/>
            <person name="Cuomo C."/>
            <person name="Ma L.-J."/>
            <person name="Wortman J.R."/>
            <person name="Batzoglou S."/>
            <person name="Lee S.-I."/>
            <person name="Bastuerkmen M."/>
            <person name="Spevak C.C."/>
            <person name="Clutterbuck J."/>
            <person name="Kapitonov V."/>
            <person name="Jurka J."/>
            <person name="Scazzocchio C."/>
            <person name="Farman M.L."/>
            <person name="Butler J."/>
            <person name="Purcell S."/>
            <person name="Harris S."/>
            <person name="Braus G.H."/>
            <person name="Draht O."/>
            <person name="Busch S."/>
            <person name="D'Enfert C."/>
            <person name="Bouchier C."/>
            <person name="Goldman G.H."/>
            <person name="Bell-Pedersen D."/>
            <person name="Griffiths-Jones S."/>
            <person name="Doonan J.H."/>
            <person name="Yu J."/>
            <person name="Vienken K."/>
            <person name="Pain A."/>
            <person name="Freitag M."/>
            <person name="Selker E.U."/>
            <person name="Archer D.B."/>
            <person name="Penalva M.A."/>
            <person name="Oakley B.R."/>
            <person name="Momany M."/>
            <person name="Tanaka T."/>
            <person name="Kumagai T."/>
            <person name="Asai K."/>
            <person name="Machida M."/>
            <person name="Nierman W.C."/>
            <person name="Denning D.W."/>
            <person name="Caddick M.X."/>
            <person name="Hynes M."/>
            <person name="Paoletti M."/>
            <person name="Fischer R."/>
            <person name="Miller B.L."/>
            <person name="Dyer P.S."/>
            <person name="Sachs M.S."/>
            <person name="Osmani S.A."/>
            <person name="Birren B.W."/>
        </authorList>
    </citation>
    <scope>NUCLEOTIDE SEQUENCE [LARGE SCALE GENOMIC DNA]</scope>
    <source>
        <strain>FGSC A4 / ATCC 38163 / CBS 112.46 / NRRL 194 / M139</strain>
    </source>
</reference>
<reference key="2">
    <citation type="journal article" date="2009" name="Fungal Genet. Biol.">
        <title>The 2008 update of the Aspergillus nidulans genome annotation: a community effort.</title>
        <authorList>
            <person name="Wortman J.R."/>
            <person name="Gilsenan J.M."/>
            <person name="Joardar V."/>
            <person name="Deegan J."/>
            <person name="Clutterbuck J."/>
            <person name="Andersen M.R."/>
            <person name="Archer D."/>
            <person name="Bencina M."/>
            <person name="Braus G."/>
            <person name="Coutinho P."/>
            <person name="von Dohren H."/>
            <person name="Doonan J."/>
            <person name="Driessen A.J."/>
            <person name="Durek P."/>
            <person name="Espeso E."/>
            <person name="Fekete E."/>
            <person name="Flipphi M."/>
            <person name="Estrada C.G."/>
            <person name="Geysens S."/>
            <person name="Goldman G."/>
            <person name="de Groot P.W."/>
            <person name="Hansen K."/>
            <person name="Harris S.D."/>
            <person name="Heinekamp T."/>
            <person name="Helmstaedt K."/>
            <person name="Henrissat B."/>
            <person name="Hofmann G."/>
            <person name="Homan T."/>
            <person name="Horio T."/>
            <person name="Horiuchi H."/>
            <person name="James S."/>
            <person name="Jones M."/>
            <person name="Karaffa L."/>
            <person name="Karanyi Z."/>
            <person name="Kato M."/>
            <person name="Keller N."/>
            <person name="Kelly D.E."/>
            <person name="Kiel J.A."/>
            <person name="Kim J.M."/>
            <person name="van der Klei I.J."/>
            <person name="Klis F.M."/>
            <person name="Kovalchuk A."/>
            <person name="Krasevec N."/>
            <person name="Kubicek C.P."/>
            <person name="Liu B."/>
            <person name="Maccabe A."/>
            <person name="Meyer V."/>
            <person name="Mirabito P."/>
            <person name="Miskei M."/>
            <person name="Mos M."/>
            <person name="Mullins J."/>
            <person name="Nelson D.R."/>
            <person name="Nielsen J."/>
            <person name="Oakley B.R."/>
            <person name="Osmani S.A."/>
            <person name="Pakula T."/>
            <person name="Paszewski A."/>
            <person name="Paulsen I."/>
            <person name="Pilsyk S."/>
            <person name="Pocsi I."/>
            <person name="Punt P.J."/>
            <person name="Ram A.F."/>
            <person name="Ren Q."/>
            <person name="Robellet X."/>
            <person name="Robson G."/>
            <person name="Seiboth B."/>
            <person name="van Solingen P."/>
            <person name="Specht T."/>
            <person name="Sun J."/>
            <person name="Taheri-Talesh N."/>
            <person name="Takeshita N."/>
            <person name="Ussery D."/>
            <person name="vanKuyk P.A."/>
            <person name="Visser H."/>
            <person name="van de Vondervoort P.J."/>
            <person name="de Vries R.P."/>
            <person name="Walton J."/>
            <person name="Xiang X."/>
            <person name="Xiong Y."/>
            <person name="Zeng A.P."/>
            <person name="Brandt B.W."/>
            <person name="Cornell M.J."/>
            <person name="van den Hondel C.A."/>
            <person name="Visser J."/>
            <person name="Oliver S.G."/>
            <person name="Turner G."/>
        </authorList>
    </citation>
    <scope>GENOME REANNOTATION</scope>
    <source>
        <strain>FGSC A4 / ATCC 38163 / CBS 112.46 / NRRL 194 / M139</strain>
    </source>
</reference>
<keyword id="KW-0156">Chromatin regulator</keyword>
<keyword id="KW-0227">DNA damage</keyword>
<keyword id="KW-0234">DNA repair</keyword>
<keyword id="KW-0539">Nucleus</keyword>
<keyword id="KW-1185">Reference proteome</keyword>
<keyword id="KW-0804">Transcription</keyword>
<keyword id="KW-0805">Transcription regulation</keyword>
<sequence length="327" mass="38147">MAPAGQTTYQKDERVLCFHHEILYEAKILDLRHTDPDDRKSPYEYLVHYKGWKNTWDDWVPQDRLRKFTEENRELATTLRREAEAALRQKSTKTSLKKKGGSDHSSARGSEERQTSVPGRGTKRARDNDIEKEEHFYTRPSVRIVMPDNLKSLLVDDWENVTKNQQVVALPAKSSVNQILDDYLKEERPKRTGSSEVDVLEEVVMGIRDYFDKSLDKILLYRFEREQYRVLRKRWESETADKGPLDVYGAEHLTRLFATMPELIAQTNMDLQSTNRLREELSKFTIWLSKNSNHYFATRYVTASNEYIEKSRGVPNPAPGTATSRLV</sequence>
<name>EAF3_EMENI</name>